<organism>
    <name type="scientific">Escherichia coli (strain K12)</name>
    <dbReference type="NCBI Taxonomy" id="83333"/>
    <lineage>
        <taxon>Bacteria</taxon>
        <taxon>Pseudomonadati</taxon>
        <taxon>Pseudomonadota</taxon>
        <taxon>Gammaproteobacteria</taxon>
        <taxon>Enterobacterales</taxon>
        <taxon>Enterobacteriaceae</taxon>
        <taxon>Escherichia</taxon>
    </lineage>
</organism>
<keyword id="KW-1185">Reference proteome</keyword>
<protein>
    <recommendedName>
        <fullName>Putative uncharacterized protein ExoD</fullName>
    </recommendedName>
</protein>
<dbReference type="EMBL" id="U00096">
    <property type="status" value="NOT_ANNOTATED_CDS"/>
    <property type="molecule type" value="Genomic_DNA"/>
</dbReference>
<dbReference type="EMBL" id="AP009048">
    <property type="protein sequence ID" value="BAE76314.1"/>
    <property type="molecule type" value="Genomic_DNA"/>
</dbReference>
<dbReference type="PIR" id="A64786">
    <property type="entry name" value="A64786"/>
</dbReference>
<dbReference type="SMR" id="P75717"/>
<dbReference type="BioGRID" id="4261070">
    <property type="interactions" value="15"/>
</dbReference>
<dbReference type="FunCoup" id="P75717">
    <property type="interactions" value="289"/>
</dbReference>
<dbReference type="KEGG" id="ecj:JW0526"/>
<dbReference type="PATRIC" id="fig|83333.103.peg.1303"/>
<dbReference type="eggNOG" id="ENOG502ZAS3">
    <property type="taxonomic scope" value="Bacteria"/>
</dbReference>
<dbReference type="HOGENOM" id="CLU_2733890_0_0_6"/>
<dbReference type="InParanoid" id="P75717"/>
<dbReference type="OrthoDB" id="1245848at2"/>
<dbReference type="Proteomes" id="UP000000625">
    <property type="component" value="Chromosome"/>
</dbReference>
<dbReference type="Gene3D" id="3.90.320.10">
    <property type="match status" value="1"/>
</dbReference>
<dbReference type="InterPro" id="IPR011604">
    <property type="entry name" value="PDDEXK-like_dom_sf"/>
</dbReference>
<dbReference type="InterPro" id="IPR011335">
    <property type="entry name" value="Restrct_endonuc-II-like"/>
</dbReference>
<dbReference type="SUPFAM" id="SSF52980">
    <property type="entry name" value="Restriction endonuclease-like"/>
    <property type="match status" value="1"/>
</dbReference>
<accession>P75717</accession>
<accession>Q2MBP2</accession>
<evidence type="ECO:0000305" key="1"/>
<name>EXOD_ECOLI</name>
<feature type="chain" id="PRO_0000268621" description="Putative uncharacterized protein ExoD">
    <location>
        <begin position="1"/>
        <end position="87"/>
    </location>
</feature>
<sequence>MKFRLGGFEAIKSAYMAQVQYSMWVTRKDAWYFANYDPRMKREGLHYVVIERNEKYMASFDEMVPEFIEKMDEALAEIGFVFGEQWR</sequence>
<comment type="miscellaneous">
    <text evidence="1">Encoded by the cryptic lambdoid prophage DLP12.</text>
</comment>
<comment type="similarity">
    <text evidence="1">To bacteriophage lambda exonuclease exo.</text>
</comment>
<comment type="caution">
    <text evidence="1">Could be the product of a pseudogene, it is missing up to 140 N-terminal residues compared to orthologs.</text>
</comment>
<proteinExistence type="uncertain"/>
<reference key="1">
    <citation type="journal article" date="1997" name="Science">
        <title>The complete genome sequence of Escherichia coli K-12.</title>
        <authorList>
            <person name="Blattner F.R."/>
            <person name="Plunkett G. III"/>
            <person name="Bloch C.A."/>
            <person name="Perna N.T."/>
            <person name="Burland V."/>
            <person name="Riley M."/>
            <person name="Collado-Vides J."/>
            <person name="Glasner J.D."/>
            <person name="Rode C.K."/>
            <person name="Mayhew G.F."/>
            <person name="Gregor J."/>
            <person name="Davis N.W."/>
            <person name="Kirkpatrick H.A."/>
            <person name="Goeden M.A."/>
            <person name="Rose D.J."/>
            <person name="Mau B."/>
            <person name="Shao Y."/>
        </authorList>
    </citation>
    <scope>NUCLEOTIDE SEQUENCE [LARGE SCALE GENOMIC DNA]</scope>
    <source>
        <strain>K12 / MG1655 / ATCC 47076</strain>
    </source>
</reference>
<reference key="2">
    <citation type="journal article" date="2006" name="Mol. Syst. Biol.">
        <title>Highly accurate genome sequences of Escherichia coli K-12 strains MG1655 and W3110.</title>
        <authorList>
            <person name="Hayashi K."/>
            <person name="Morooka N."/>
            <person name="Yamamoto Y."/>
            <person name="Fujita K."/>
            <person name="Isono K."/>
            <person name="Choi S."/>
            <person name="Ohtsubo E."/>
            <person name="Baba T."/>
            <person name="Wanner B.L."/>
            <person name="Mori H."/>
            <person name="Horiuchi T."/>
        </authorList>
    </citation>
    <scope>NUCLEOTIDE SEQUENCE [LARGE SCALE GENOMIC DNA]</scope>
    <source>
        <strain>K12 / W3110 / ATCC 27325 / DSM 5911</strain>
    </source>
</reference>
<gene>
    <name type="primary">exoD</name>
    <name type="synonym">ybcC</name>
    <name type="ordered locus">b0539</name>
    <name type="ordered locus">JW0526</name>
</gene>